<proteinExistence type="inferred from homology"/>
<accession>B4SCY8</accession>
<reference key="1">
    <citation type="submission" date="2008-06" db="EMBL/GenBank/DDBJ databases">
        <title>Complete sequence of Pelodictyon phaeoclathratiforme BU-1.</title>
        <authorList>
            <consortium name="US DOE Joint Genome Institute"/>
            <person name="Lucas S."/>
            <person name="Copeland A."/>
            <person name="Lapidus A."/>
            <person name="Glavina del Rio T."/>
            <person name="Dalin E."/>
            <person name="Tice H."/>
            <person name="Bruce D."/>
            <person name="Goodwin L."/>
            <person name="Pitluck S."/>
            <person name="Schmutz J."/>
            <person name="Larimer F."/>
            <person name="Land M."/>
            <person name="Hauser L."/>
            <person name="Kyrpides N."/>
            <person name="Mikhailova N."/>
            <person name="Liu Z."/>
            <person name="Li T."/>
            <person name="Zhao F."/>
            <person name="Overmann J."/>
            <person name="Bryant D.A."/>
            <person name="Richardson P."/>
        </authorList>
    </citation>
    <scope>NUCLEOTIDE SEQUENCE [LARGE SCALE GENOMIC DNA]</scope>
    <source>
        <strain>DSM 5477 / BU-1</strain>
    </source>
</reference>
<sequence>MLIIPAIDIKEGKCVRLTRGDFSQKKIYLDNPNDMAIIWRKQNAKMLHIVDLDAALTGEMVNFEKIREIVTNLDIPVQVGGGIRSADAVKRYLDIGVGRVVIGSAAVTNPKLVEELLHTYTSSQIVVGIDAENGIPKIKGWTESSMIQDYDLALQMKEMGIERIIYTDISRDGMMQGFGYESTRRFAERAGMKITASGGVTNAEDLHRLNELQPFGVDSVIIGKALYECNFPCQELWYNFEEEISLDHNFSTARKK</sequence>
<evidence type="ECO:0000255" key="1">
    <source>
        <dbReference type="HAMAP-Rule" id="MF_01014"/>
    </source>
</evidence>
<gene>
    <name evidence="1" type="primary">hisA</name>
    <name type="ordered locus">Ppha_0496</name>
</gene>
<name>HIS4_PELPB</name>
<comment type="catalytic activity">
    <reaction evidence="1">
        <text>1-(5-phospho-beta-D-ribosyl)-5-[(5-phospho-beta-D-ribosylamino)methylideneamino]imidazole-4-carboxamide = 5-[(5-phospho-1-deoxy-D-ribulos-1-ylimino)methylamino]-1-(5-phospho-beta-D-ribosyl)imidazole-4-carboxamide</text>
        <dbReference type="Rhea" id="RHEA:15469"/>
        <dbReference type="ChEBI" id="CHEBI:58435"/>
        <dbReference type="ChEBI" id="CHEBI:58525"/>
        <dbReference type="EC" id="5.3.1.16"/>
    </reaction>
</comment>
<comment type="pathway">
    <text evidence="1">Amino-acid biosynthesis; L-histidine biosynthesis; L-histidine from 5-phospho-alpha-D-ribose 1-diphosphate: step 4/9.</text>
</comment>
<comment type="subcellular location">
    <subcellularLocation>
        <location evidence="1">Cytoplasm</location>
    </subcellularLocation>
</comment>
<comment type="similarity">
    <text evidence="1">Belongs to the HisA/HisF family.</text>
</comment>
<feature type="chain" id="PRO_1000135136" description="1-(5-phosphoribosyl)-5-[(5-phosphoribosylamino)methylideneamino] imidazole-4-carboxamide isomerase">
    <location>
        <begin position="1"/>
        <end position="256"/>
    </location>
</feature>
<feature type="active site" description="Proton acceptor" evidence="1">
    <location>
        <position position="8"/>
    </location>
</feature>
<feature type="active site" description="Proton donor" evidence="1">
    <location>
        <position position="130"/>
    </location>
</feature>
<dbReference type="EC" id="5.3.1.16" evidence="1"/>
<dbReference type="EMBL" id="CP001110">
    <property type="protein sequence ID" value="ACF42822.1"/>
    <property type="molecule type" value="Genomic_DNA"/>
</dbReference>
<dbReference type="RefSeq" id="WP_012507317.1">
    <property type="nucleotide sequence ID" value="NC_011060.1"/>
</dbReference>
<dbReference type="SMR" id="B4SCY8"/>
<dbReference type="STRING" id="324925.Ppha_0496"/>
<dbReference type="KEGG" id="pph:Ppha_0496"/>
<dbReference type="eggNOG" id="COG0106">
    <property type="taxonomic scope" value="Bacteria"/>
</dbReference>
<dbReference type="HOGENOM" id="CLU_048577_1_1_10"/>
<dbReference type="OrthoDB" id="9807749at2"/>
<dbReference type="UniPathway" id="UPA00031">
    <property type="reaction ID" value="UER00009"/>
</dbReference>
<dbReference type="Proteomes" id="UP000002724">
    <property type="component" value="Chromosome"/>
</dbReference>
<dbReference type="GO" id="GO:0005737">
    <property type="term" value="C:cytoplasm"/>
    <property type="evidence" value="ECO:0007669"/>
    <property type="project" value="UniProtKB-SubCell"/>
</dbReference>
<dbReference type="GO" id="GO:0003949">
    <property type="term" value="F:1-(5-phosphoribosyl)-5-[(5-phosphoribosylamino)methylideneamino]imidazole-4-carboxamide isomerase activity"/>
    <property type="evidence" value="ECO:0007669"/>
    <property type="project" value="UniProtKB-UniRule"/>
</dbReference>
<dbReference type="GO" id="GO:0000105">
    <property type="term" value="P:L-histidine biosynthetic process"/>
    <property type="evidence" value="ECO:0007669"/>
    <property type="project" value="UniProtKB-UniRule"/>
</dbReference>
<dbReference type="GO" id="GO:0000162">
    <property type="term" value="P:L-tryptophan biosynthetic process"/>
    <property type="evidence" value="ECO:0007669"/>
    <property type="project" value="TreeGrafter"/>
</dbReference>
<dbReference type="CDD" id="cd04732">
    <property type="entry name" value="HisA"/>
    <property type="match status" value="1"/>
</dbReference>
<dbReference type="FunFam" id="3.20.20.70:FF:000009">
    <property type="entry name" value="1-(5-phosphoribosyl)-5-[(5-phosphoribosylamino)methylideneamino] imidazole-4-carboxamide isomerase"/>
    <property type="match status" value="1"/>
</dbReference>
<dbReference type="Gene3D" id="3.20.20.70">
    <property type="entry name" value="Aldolase class I"/>
    <property type="match status" value="1"/>
</dbReference>
<dbReference type="HAMAP" id="MF_01014">
    <property type="entry name" value="HisA"/>
    <property type="match status" value="1"/>
</dbReference>
<dbReference type="InterPro" id="IPR013785">
    <property type="entry name" value="Aldolase_TIM"/>
</dbReference>
<dbReference type="InterPro" id="IPR006062">
    <property type="entry name" value="His_biosynth"/>
</dbReference>
<dbReference type="InterPro" id="IPR006063">
    <property type="entry name" value="HisA_bact_arch"/>
</dbReference>
<dbReference type="InterPro" id="IPR044524">
    <property type="entry name" value="Isoase_HisA-like"/>
</dbReference>
<dbReference type="InterPro" id="IPR023016">
    <property type="entry name" value="Isoase_HisA-like_bact"/>
</dbReference>
<dbReference type="InterPro" id="IPR011060">
    <property type="entry name" value="RibuloseP-bd_barrel"/>
</dbReference>
<dbReference type="NCBIfam" id="TIGR00007">
    <property type="entry name" value="1-(5-phosphoribosyl)-5-[(5-phosphoribosylamino)methylideneamino]imidazole-4-carboxamide isomerase"/>
    <property type="match status" value="1"/>
</dbReference>
<dbReference type="PANTHER" id="PTHR43090">
    <property type="entry name" value="1-(5-PHOSPHORIBOSYL)-5-[(5-PHOSPHORIBOSYLAMINO)METHYLIDENEAMINO] IMIDAZOLE-4-CARBOXAMIDE ISOMERASE"/>
    <property type="match status" value="1"/>
</dbReference>
<dbReference type="PANTHER" id="PTHR43090:SF2">
    <property type="entry name" value="1-(5-PHOSPHORIBOSYL)-5-[(5-PHOSPHORIBOSYLAMINO)METHYLIDENEAMINO] IMIDAZOLE-4-CARBOXAMIDE ISOMERASE"/>
    <property type="match status" value="1"/>
</dbReference>
<dbReference type="Pfam" id="PF00977">
    <property type="entry name" value="His_biosynth"/>
    <property type="match status" value="1"/>
</dbReference>
<dbReference type="SUPFAM" id="SSF51366">
    <property type="entry name" value="Ribulose-phoshate binding barrel"/>
    <property type="match status" value="1"/>
</dbReference>
<protein>
    <recommendedName>
        <fullName evidence="1">1-(5-phosphoribosyl)-5-[(5-phosphoribosylamino)methylideneamino] imidazole-4-carboxamide isomerase</fullName>
        <ecNumber evidence="1">5.3.1.16</ecNumber>
    </recommendedName>
    <alternativeName>
        <fullName evidence="1">Phosphoribosylformimino-5-aminoimidazole carboxamide ribotide isomerase</fullName>
    </alternativeName>
</protein>
<organism>
    <name type="scientific">Pelodictyon phaeoclathratiforme (strain DSM 5477 / BU-1)</name>
    <dbReference type="NCBI Taxonomy" id="324925"/>
    <lineage>
        <taxon>Bacteria</taxon>
        <taxon>Pseudomonadati</taxon>
        <taxon>Chlorobiota</taxon>
        <taxon>Chlorobiia</taxon>
        <taxon>Chlorobiales</taxon>
        <taxon>Chlorobiaceae</taxon>
        <taxon>Chlorobium/Pelodictyon group</taxon>
        <taxon>Pelodictyon</taxon>
    </lineage>
</organism>
<keyword id="KW-0028">Amino-acid biosynthesis</keyword>
<keyword id="KW-0963">Cytoplasm</keyword>
<keyword id="KW-0368">Histidine biosynthesis</keyword>
<keyword id="KW-0413">Isomerase</keyword>
<keyword id="KW-1185">Reference proteome</keyword>